<dbReference type="EC" id="2.1.1.-"/>
<dbReference type="EMBL" id="CU329672">
    <property type="protein sequence ID" value="CAA20873.1"/>
    <property type="molecule type" value="Genomic_DNA"/>
</dbReference>
<dbReference type="PIR" id="T40864">
    <property type="entry name" value="T40864"/>
</dbReference>
<dbReference type="RefSeq" id="NP_588349.1">
    <property type="nucleotide sequence ID" value="NM_001023340.1"/>
</dbReference>
<dbReference type="SMR" id="O74405"/>
<dbReference type="BioGRID" id="275802">
    <property type="interactions" value="37"/>
</dbReference>
<dbReference type="FunCoup" id="O74405">
    <property type="interactions" value="128"/>
</dbReference>
<dbReference type="STRING" id="284812.O74405"/>
<dbReference type="PaxDb" id="4896-SPCC1223.04c.1"/>
<dbReference type="EnsemblFungi" id="SPCC1223.04c.1">
    <property type="protein sequence ID" value="SPCC1223.04c.1:pep"/>
    <property type="gene ID" value="SPCC1223.04c"/>
</dbReference>
<dbReference type="GeneID" id="2539232"/>
<dbReference type="KEGG" id="spo:2539232"/>
<dbReference type="PomBase" id="SPCC1223.04c">
    <property type="gene designation" value="set11"/>
</dbReference>
<dbReference type="VEuPathDB" id="FungiDB:SPCC1223.04c"/>
<dbReference type="eggNOG" id="KOG1337">
    <property type="taxonomic scope" value="Eukaryota"/>
</dbReference>
<dbReference type="HOGENOM" id="CLU_041939_3_2_1"/>
<dbReference type="InParanoid" id="O74405"/>
<dbReference type="OMA" id="WNDAIGM"/>
<dbReference type="PhylomeDB" id="O74405"/>
<dbReference type="Reactome" id="R-SPO-3214841">
    <property type="pathway name" value="PKMTs methylate histone lysines"/>
</dbReference>
<dbReference type="PRO" id="PR:O74405"/>
<dbReference type="Proteomes" id="UP000002485">
    <property type="component" value="Chromosome III"/>
</dbReference>
<dbReference type="GO" id="GO:0005829">
    <property type="term" value="C:cytosol"/>
    <property type="evidence" value="ECO:0007005"/>
    <property type="project" value="PomBase"/>
</dbReference>
<dbReference type="GO" id="GO:0005730">
    <property type="term" value="C:nucleolus"/>
    <property type="evidence" value="ECO:0000314"/>
    <property type="project" value="PomBase"/>
</dbReference>
<dbReference type="GO" id="GO:0005634">
    <property type="term" value="C:nucleus"/>
    <property type="evidence" value="ECO:0007005"/>
    <property type="project" value="PomBase"/>
</dbReference>
<dbReference type="GO" id="GO:0046975">
    <property type="term" value="F:histone H3K36 methyltransferase activity"/>
    <property type="evidence" value="ECO:0000318"/>
    <property type="project" value="GO_Central"/>
</dbReference>
<dbReference type="GO" id="GO:0042800">
    <property type="term" value="F:histone H3K4 methyltransferase activity"/>
    <property type="evidence" value="ECO:0000318"/>
    <property type="project" value="GO_Central"/>
</dbReference>
<dbReference type="GO" id="GO:0016279">
    <property type="term" value="F:protein-lysine N-methyltransferase activity"/>
    <property type="evidence" value="ECO:0000314"/>
    <property type="project" value="PomBase"/>
</dbReference>
<dbReference type="GO" id="GO:0003713">
    <property type="term" value="F:transcription coactivator activity"/>
    <property type="evidence" value="ECO:0000318"/>
    <property type="project" value="GO_Central"/>
</dbReference>
<dbReference type="GO" id="GO:0051321">
    <property type="term" value="P:meiotic cell cycle"/>
    <property type="evidence" value="ECO:0007669"/>
    <property type="project" value="UniProtKB-KW"/>
</dbReference>
<dbReference type="GO" id="GO:0032259">
    <property type="term" value="P:methylation"/>
    <property type="evidence" value="ECO:0007669"/>
    <property type="project" value="UniProtKB-KW"/>
</dbReference>
<dbReference type="GO" id="GO:0045944">
    <property type="term" value="P:positive regulation of transcription by RNA polymerase II"/>
    <property type="evidence" value="ECO:0000318"/>
    <property type="project" value="GO_Central"/>
</dbReference>
<dbReference type="GO" id="GO:0042254">
    <property type="term" value="P:ribosome biogenesis"/>
    <property type="evidence" value="ECO:0000304"/>
    <property type="project" value="PomBase"/>
</dbReference>
<dbReference type="Gene3D" id="3.90.1410.10">
    <property type="entry name" value="set domain protein methyltransferase, domain 1"/>
    <property type="match status" value="1"/>
</dbReference>
<dbReference type="InterPro" id="IPR001214">
    <property type="entry name" value="SET_dom"/>
</dbReference>
<dbReference type="InterPro" id="IPR046341">
    <property type="entry name" value="SET_dom_sf"/>
</dbReference>
<dbReference type="InterPro" id="IPR016852">
    <property type="entry name" value="SET_MeTrfase"/>
</dbReference>
<dbReference type="InterPro" id="IPR050600">
    <property type="entry name" value="SETD3_SETD6_MTase"/>
</dbReference>
<dbReference type="PANTHER" id="PTHR13271:SF47">
    <property type="entry name" value="ACTIN-HISTIDINE N-METHYLTRANSFERASE"/>
    <property type="match status" value="1"/>
</dbReference>
<dbReference type="PANTHER" id="PTHR13271">
    <property type="entry name" value="UNCHARACTERIZED PUTATIVE METHYLTRANSFERASE"/>
    <property type="match status" value="1"/>
</dbReference>
<dbReference type="Pfam" id="PF00856">
    <property type="entry name" value="SET"/>
    <property type="match status" value="1"/>
</dbReference>
<dbReference type="PIRSF" id="PIRSF027158">
    <property type="entry name" value="Lys_MTase_YDR198C_prd"/>
    <property type="match status" value="1"/>
</dbReference>
<dbReference type="SMART" id="SM00317">
    <property type="entry name" value="SET"/>
    <property type="match status" value="1"/>
</dbReference>
<dbReference type="SUPFAM" id="SSF82199">
    <property type="entry name" value="SET domain"/>
    <property type="match status" value="1"/>
</dbReference>
<dbReference type="PROSITE" id="PS50280">
    <property type="entry name" value="SET"/>
    <property type="match status" value="1"/>
</dbReference>
<evidence type="ECO:0000255" key="1">
    <source>
        <dbReference type="PROSITE-ProRule" id="PRU00190"/>
    </source>
</evidence>
<evidence type="ECO:0000269" key="2">
    <source>
    </source>
</evidence>
<evidence type="ECO:0000269" key="3">
    <source>
    </source>
</evidence>
<evidence type="ECO:0000305" key="4"/>
<name>SET11_SCHPO</name>
<gene>
    <name type="primary">set11</name>
    <name type="synonym">mug76</name>
    <name type="ORF">SPCC1223.04c</name>
</gene>
<comment type="function">
    <text evidence="2 3">S-adenosyl-L-methionine-dependent protein-lysine N-methyltransferase that trimethylates 60S ribosomal protein L12 (rpl1201 and rpl1202) at 'Lys-4' and may dimethylate L12 also at 'Lys-40' and 'Lys-41'. Overexpression causes a severe growth defect. Has a role in meiosis.</text>
</comment>
<comment type="subcellular location">
    <subcellularLocation>
        <location>Cytoplasm</location>
    </subcellularLocation>
    <subcellularLocation>
        <location>Nucleus</location>
        <location>Nucleolus</location>
    </subcellularLocation>
</comment>
<comment type="similarity">
    <text evidence="1 4">Belongs to the class V-like SAM-binding methyltransferase superfamily. RKM2 family.</text>
</comment>
<keyword id="KW-0963">Cytoplasm</keyword>
<keyword id="KW-0469">Meiosis</keyword>
<keyword id="KW-0489">Methyltransferase</keyword>
<keyword id="KW-0539">Nucleus</keyword>
<keyword id="KW-1185">Reference proteome</keyword>
<keyword id="KW-0949">S-adenosyl-L-methionine</keyword>
<keyword id="KW-0808">Transferase</keyword>
<sequence length="381" mass="44080">MSNKQNIESEVSWVKSKGAFVHPSLEFSVIPDAGSCVLANNDINENTVLLKLPPNILINKRTCSRYSFRDKLTSFQFLSWLISEDVHSNLEISPYYTKALPQGFSFHPVTLTSDHPLWSILPDEVRNSLLERKNVMAFDYEQVKKFVSVDQPTFQWGWLCVNTRCLYYDTGSKNTEDHLTLAPIFEYFNHSPEAQTALINTRGTITIKSTRRIDKGEQIFLCYGPHGNDKLFTEYGFCLSNNPNISIQLDRFIEFDKWQQSFLQDHGYWNDYTCSLHGASFRTLVGVRTLLVSPSEKLNDASYDQTRRVLQYINGFSDGSRDRQDVEDYLKKVLQELLCEAEECKEKVKGISDGSYVFICAEQLWKDRIMCCQYLMEHSFE</sequence>
<feature type="chain" id="PRO_0000116804" description="Ribosomal lysine N-methyltransferase set11">
    <location>
        <begin position="1"/>
        <end position="381"/>
    </location>
</feature>
<feature type="domain" description="SET" evidence="1">
    <location>
        <begin position="23"/>
        <end position="224"/>
    </location>
</feature>
<feature type="binding site" evidence="1">
    <location>
        <position position="223"/>
    </location>
    <ligand>
        <name>S-adenosyl-L-methionine</name>
        <dbReference type="ChEBI" id="CHEBI:59789"/>
    </ligand>
</feature>
<feature type="mutagenesis site" description="Abolishes enzymatic activity." evidence="3">
    <location>
        <begin position="189"/>
        <end position="192"/>
    </location>
</feature>
<feature type="mutagenesis site" description="Abolishes enzymatic activity." evidence="3">
    <location>
        <begin position="216"/>
        <end position="224"/>
    </location>
</feature>
<proteinExistence type="evidence at protein level"/>
<protein>
    <recommendedName>
        <fullName>Ribosomal lysine N-methyltransferase set11</fullName>
        <ecNumber>2.1.1.-</ecNumber>
    </recommendedName>
    <alternativeName>
        <fullName>Meiotically up-regulated gene 76 protein</fullName>
    </alternativeName>
    <alternativeName>
        <fullName>SET domain-containing protein 11</fullName>
    </alternativeName>
</protein>
<reference key="1">
    <citation type="journal article" date="2002" name="Nature">
        <title>The genome sequence of Schizosaccharomyces pombe.</title>
        <authorList>
            <person name="Wood V."/>
            <person name="Gwilliam R."/>
            <person name="Rajandream M.A."/>
            <person name="Lyne M.H."/>
            <person name="Lyne R."/>
            <person name="Stewart A."/>
            <person name="Sgouros J.G."/>
            <person name="Peat N."/>
            <person name="Hayles J."/>
            <person name="Baker S.G."/>
            <person name="Basham D."/>
            <person name="Bowman S."/>
            <person name="Brooks K."/>
            <person name="Brown D."/>
            <person name="Brown S."/>
            <person name="Chillingworth T."/>
            <person name="Churcher C.M."/>
            <person name="Collins M."/>
            <person name="Connor R."/>
            <person name="Cronin A."/>
            <person name="Davis P."/>
            <person name="Feltwell T."/>
            <person name="Fraser A."/>
            <person name="Gentles S."/>
            <person name="Goble A."/>
            <person name="Hamlin N."/>
            <person name="Harris D.E."/>
            <person name="Hidalgo J."/>
            <person name="Hodgson G."/>
            <person name="Holroyd S."/>
            <person name="Hornsby T."/>
            <person name="Howarth S."/>
            <person name="Huckle E.J."/>
            <person name="Hunt S."/>
            <person name="Jagels K."/>
            <person name="James K.D."/>
            <person name="Jones L."/>
            <person name="Jones M."/>
            <person name="Leather S."/>
            <person name="McDonald S."/>
            <person name="McLean J."/>
            <person name="Mooney P."/>
            <person name="Moule S."/>
            <person name="Mungall K.L."/>
            <person name="Murphy L.D."/>
            <person name="Niblett D."/>
            <person name="Odell C."/>
            <person name="Oliver K."/>
            <person name="O'Neil S."/>
            <person name="Pearson D."/>
            <person name="Quail M.A."/>
            <person name="Rabbinowitsch E."/>
            <person name="Rutherford K.M."/>
            <person name="Rutter S."/>
            <person name="Saunders D."/>
            <person name="Seeger K."/>
            <person name="Sharp S."/>
            <person name="Skelton J."/>
            <person name="Simmonds M.N."/>
            <person name="Squares R."/>
            <person name="Squares S."/>
            <person name="Stevens K."/>
            <person name="Taylor K."/>
            <person name="Taylor R.G."/>
            <person name="Tivey A."/>
            <person name="Walsh S.V."/>
            <person name="Warren T."/>
            <person name="Whitehead S."/>
            <person name="Woodward J.R."/>
            <person name="Volckaert G."/>
            <person name="Aert R."/>
            <person name="Robben J."/>
            <person name="Grymonprez B."/>
            <person name="Weltjens I."/>
            <person name="Vanstreels E."/>
            <person name="Rieger M."/>
            <person name="Schaefer M."/>
            <person name="Mueller-Auer S."/>
            <person name="Gabel C."/>
            <person name="Fuchs M."/>
            <person name="Duesterhoeft A."/>
            <person name="Fritzc C."/>
            <person name="Holzer E."/>
            <person name="Moestl D."/>
            <person name="Hilbert H."/>
            <person name="Borzym K."/>
            <person name="Langer I."/>
            <person name="Beck A."/>
            <person name="Lehrach H."/>
            <person name="Reinhardt R."/>
            <person name="Pohl T.M."/>
            <person name="Eger P."/>
            <person name="Zimmermann W."/>
            <person name="Wedler H."/>
            <person name="Wambutt R."/>
            <person name="Purnelle B."/>
            <person name="Goffeau A."/>
            <person name="Cadieu E."/>
            <person name="Dreano S."/>
            <person name="Gloux S."/>
            <person name="Lelaure V."/>
            <person name="Mottier S."/>
            <person name="Galibert F."/>
            <person name="Aves S.J."/>
            <person name="Xiang Z."/>
            <person name="Hunt C."/>
            <person name="Moore K."/>
            <person name="Hurst S.M."/>
            <person name="Lucas M."/>
            <person name="Rochet M."/>
            <person name="Gaillardin C."/>
            <person name="Tallada V.A."/>
            <person name="Garzon A."/>
            <person name="Thode G."/>
            <person name="Daga R.R."/>
            <person name="Cruzado L."/>
            <person name="Jimenez J."/>
            <person name="Sanchez M."/>
            <person name="del Rey F."/>
            <person name="Benito J."/>
            <person name="Dominguez A."/>
            <person name="Revuelta J.L."/>
            <person name="Moreno S."/>
            <person name="Armstrong J."/>
            <person name="Forsburg S.L."/>
            <person name="Cerutti L."/>
            <person name="Lowe T."/>
            <person name="McCombie W.R."/>
            <person name="Paulsen I."/>
            <person name="Potashkin J."/>
            <person name="Shpakovski G.V."/>
            <person name="Ussery D."/>
            <person name="Barrell B.G."/>
            <person name="Nurse P."/>
        </authorList>
    </citation>
    <scope>NUCLEOTIDE SEQUENCE [LARGE SCALE GENOMIC DNA]</scope>
    <source>
        <strain>972 / ATCC 24843</strain>
    </source>
</reference>
<reference key="2">
    <citation type="journal article" date="2005" name="Curr. Biol.">
        <title>A large-scale screen in S. pombe identifies seven novel genes required for critical meiotic events.</title>
        <authorList>
            <person name="Martin-Castellanos C."/>
            <person name="Blanco M."/>
            <person name="Rozalen A.E."/>
            <person name="Perez-Hidalgo L."/>
            <person name="Garcia A.I."/>
            <person name="Conde F."/>
            <person name="Mata J."/>
            <person name="Ellermeier C."/>
            <person name="Davis L."/>
            <person name="San-Segundo P."/>
            <person name="Smith G.R."/>
            <person name="Moreno S."/>
        </authorList>
    </citation>
    <scope>FUNCTION IN MEIOSIS</scope>
</reference>
<reference key="3">
    <citation type="journal article" date="2006" name="Nat. Biotechnol.">
        <title>ORFeome cloning and global analysis of protein localization in the fission yeast Schizosaccharomyces pombe.</title>
        <authorList>
            <person name="Matsuyama A."/>
            <person name="Arai R."/>
            <person name="Yashiroda Y."/>
            <person name="Shirai A."/>
            <person name="Kamata A."/>
            <person name="Sekido S."/>
            <person name="Kobayashi Y."/>
            <person name="Hashimoto A."/>
            <person name="Hamamoto M."/>
            <person name="Hiraoka Y."/>
            <person name="Horinouchi S."/>
            <person name="Yoshida M."/>
        </authorList>
    </citation>
    <scope>SUBCELLULAR LOCATION [LARGE SCALE ANALYSIS]</scope>
</reference>
<reference key="4">
    <citation type="journal article" date="2008" name="J. Biol. Chem.">
        <title>A conserved SET domain methyltransferase, Set11, modifies ribosomal protein Rpl12 in fission yeast.</title>
        <authorList>
            <person name="Sadaie M."/>
            <person name="Shinmyozu K."/>
            <person name="Nakayama J."/>
        </authorList>
    </citation>
    <scope>FUNCTION</scope>
    <scope>SUBCELLULAR LOCATION</scope>
    <scope>MUTAGENESIS OF 189-ASN--PRO-192 AND 216-GLY--TYR-224</scope>
</reference>
<organism>
    <name type="scientific">Schizosaccharomyces pombe (strain 972 / ATCC 24843)</name>
    <name type="common">Fission yeast</name>
    <dbReference type="NCBI Taxonomy" id="284812"/>
    <lineage>
        <taxon>Eukaryota</taxon>
        <taxon>Fungi</taxon>
        <taxon>Dikarya</taxon>
        <taxon>Ascomycota</taxon>
        <taxon>Taphrinomycotina</taxon>
        <taxon>Schizosaccharomycetes</taxon>
        <taxon>Schizosaccharomycetales</taxon>
        <taxon>Schizosaccharomycetaceae</taxon>
        <taxon>Schizosaccharomyces</taxon>
    </lineage>
</organism>
<accession>O74405</accession>